<reference key="1">
    <citation type="journal article" date="2004" name="Science">
        <title>The 1.2-megabase genome sequence of Mimivirus.</title>
        <authorList>
            <person name="Raoult D."/>
            <person name="Audic S."/>
            <person name="Robert C."/>
            <person name="Abergel C."/>
            <person name="Renesto P."/>
            <person name="Ogata H."/>
            <person name="La Scola B."/>
            <person name="Susan M."/>
            <person name="Claverie J.-M."/>
        </authorList>
    </citation>
    <scope>NUCLEOTIDE SEQUENCE [LARGE SCALE GENOMIC DNA]</scope>
    <source>
        <strain>Rowbotham-Bradford</strain>
    </source>
</reference>
<proteinExistence type="predicted"/>
<gene>
    <name type="ordered locus">MIMI_R880</name>
</gene>
<sequence length="255" mass="30094">MNILPYEIHLLVIDYLYNDDLSIYFVNKYFFSMLKHSKIQNTIIKKIIKKGELGVIRYINKLFRVNDELVIGNKLFESSGINNYLLTACKYGHCKLVKYFVECGADIHYKTDYALQLACKYGYLEIVKYLVKKGANINTDDCYAVQLASREGHLKIVKYLVELGTNVRKDRDLAFRWSVENNHLSVTKYLVELGSDVRSEKNYAIKKSCEYGYFEMTQYLMNQGANFRVDNDYAVRFASKKWTFKYCRIFDIMWR</sequence>
<dbReference type="EMBL" id="AY653733">
    <property type="protein sequence ID" value="AAV51137.1"/>
    <property type="molecule type" value="Genomic_DNA"/>
</dbReference>
<dbReference type="SMR" id="Q5UQX8"/>
<dbReference type="KEGG" id="vg:9925549"/>
<dbReference type="OrthoDB" id="38654at10239"/>
<dbReference type="Proteomes" id="UP000001134">
    <property type="component" value="Genome"/>
</dbReference>
<dbReference type="Gene3D" id="1.25.40.20">
    <property type="entry name" value="Ankyrin repeat-containing domain"/>
    <property type="match status" value="2"/>
</dbReference>
<dbReference type="InterPro" id="IPR002110">
    <property type="entry name" value="Ankyrin_rpt"/>
</dbReference>
<dbReference type="InterPro" id="IPR036770">
    <property type="entry name" value="Ankyrin_rpt-contain_sf"/>
</dbReference>
<dbReference type="PANTHER" id="PTHR24188">
    <property type="entry name" value="ANKYRIN REPEAT PROTEIN"/>
    <property type="match status" value="1"/>
</dbReference>
<dbReference type="PANTHER" id="PTHR24188:SF29">
    <property type="entry name" value="GH09064P"/>
    <property type="match status" value="1"/>
</dbReference>
<dbReference type="Pfam" id="PF12796">
    <property type="entry name" value="Ank_2"/>
    <property type="match status" value="1"/>
</dbReference>
<dbReference type="SMART" id="SM00248">
    <property type="entry name" value="ANK"/>
    <property type="match status" value="5"/>
</dbReference>
<dbReference type="SUPFAM" id="SSF48403">
    <property type="entry name" value="Ankyrin repeat"/>
    <property type="match status" value="1"/>
</dbReference>
<dbReference type="PROSITE" id="PS50297">
    <property type="entry name" value="ANK_REP_REGION"/>
    <property type="match status" value="1"/>
</dbReference>
<dbReference type="PROSITE" id="PS50088">
    <property type="entry name" value="ANK_REPEAT"/>
    <property type="match status" value="1"/>
</dbReference>
<name>YR880_MIMIV</name>
<feature type="chain" id="PRO_0000067222" description="Putative ankyrin repeat protein R880">
    <location>
        <begin position="1"/>
        <end position="255"/>
    </location>
</feature>
<feature type="repeat" description="ANK 1">
    <location>
        <begin position="79"/>
        <end position="109"/>
    </location>
</feature>
<feature type="repeat" description="ANK 2">
    <location>
        <begin position="110"/>
        <end position="139"/>
    </location>
</feature>
<feature type="repeat" description="ANK 3">
    <location>
        <begin position="141"/>
        <end position="169"/>
    </location>
</feature>
<feature type="repeat" description="ANK 4">
    <location>
        <begin position="171"/>
        <end position="199"/>
    </location>
</feature>
<feature type="repeat" description="ANK 5">
    <location>
        <begin position="201"/>
        <end position="229"/>
    </location>
</feature>
<protein>
    <recommendedName>
        <fullName>Putative ankyrin repeat protein R880</fullName>
    </recommendedName>
</protein>
<accession>Q5UQX8</accession>
<organismHost>
    <name type="scientific">Acanthamoeba polyphaga</name>
    <name type="common">Amoeba</name>
    <dbReference type="NCBI Taxonomy" id="5757"/>
</organismHost>
<keyword id="KW-0040">ANK repeat</keyword>
<keyword id="KW-1185">Reference proteome</keyword>
<keyword id="KW-0677">Repeat</keyword>
<organism>
    <name type="scientific">Acanthamoeba polyphaga mimivirus</name>
    <name type="common">APMV</name>
    <dbReference type="NCBI Taxonomy" id="212035"/>
    <lineage>
        <taxon>Viruses</taxon>
        <taxon>Varidnaviria</taxon>
        <taxon>Bamfordvirae</taxon>
        <taxon>Nucleocytoviricota</taxon>
        <taxon>Megaviricetes</taxon>
        <taxon>Imitervirales</taxon>
        <taxon>Mimiviridae</taxon>
        <taxon>Megamimivirinae</taxon>
        <taxon>Mimivirus</taxon>
        <taxon>Mimivirus bradfordmassiliense</taxon>
    </lineage>
</organism>